<comment type="function">
    <text evidence="2">Phosphate-binding protein.</text>
</comment>
<comment type="subunit">
    <text>Heterooligomer with human PON1.</text>
</comment>
<comment type="subcellular location">
    <subcellularLocation>
        <location evidence="1">Secreted</location>
    </subcellularLocation>
</comment>
<comment type="tissue specificity">
    <text evidence="1">Found in human plasma.</text>
</comment>
<comment type="mass spectrometry" mass="38529.11" error="0.06" method="Electrospray" evidence="2"/>
<comment type="similarity">
    <text evidence="3">Belongs to the PstS family.</text>
</comment>
<comment type="caution">
    <text evidence="3">Although this is said to be a human protein, it is not encoded in the human genome. It is highly similar to microbial proteins and belongs to a family of microbial proteins.</text>
</comment>
<protein>
    <recommendedName>
        <fullName>Phosphate-binding protein</fullName>
        <shortName>HPBP</shortName>
    </recommendedName>
</protein>
<reference key="1">
    <citation type="journal article" date="2008" name="Proteins">
        <title>Tandem use of X-ray crystallography and mass spectrometry to obtain ab initio the complete and exact amino acids sequence of HPBP, a human 38-kDa apolipoprotein.</title>
        <authorList>
            <person name="Diemer H."/>
            <person name="Elias M."/>
            <person name="Renault F."/>
            <person name="Rochu D."/>
            <person name="Contreras-Martel C."/>
            <person name="Schaeffer C."/>
            <person name="Van Dorsselaer A."/>
            <person name="Chabriere E."/>
        </authorList>
    </citation>
    <scope>PROTEIN SEQUENCE</scope>
    <scope>FUNCTION</scope>
    <scope>MASS SPECTROMETRY</scope>
    <source>
        <tissue>Plasma</tissue>
    </source>
</reference>
<reference evidence="3" key="2">
    <citation type="journal article" date="2006" name="Structure">
        <title>Serendipitous discovery and X-ray structure of a human phosphate binding apolipoprotein.</title>
        <authorList>
            <person name="Morales R."/>
            <person name="Berna A."/>
            <person name="Carpentier P."/>
            <person name="Contreras-Martel C."/>
            <person name="Renault F."/>
            <person name="Nicodeme M."/>
            <person name="Chesne-Seck M.-L."/>
            <person name="Bernier F."/>
            <person name="Dupuy J."/>
            <person name="Schaeffer C."/>
            <person name="Diemer H."/>
            <person name="van Dorsselaer A."/>
            <person name="Fontecilla-Camps J.C."/>
            <person name="Masson P."/>
            <person name="Rochu D."/>
            <person name="Chabriere E."/>
        </authorList>
    </citation>
    <scope>PROTEIN SEQUENCE OF 1-33; 38-125; 127-152; 197-230; 246-298; 313-321; 332-347 AND 356-372</scope>
    <scope>X-RAY CRYSTALLOGRAPHY (1.9 ANGSTROMS)</scope>
    <scope>INTERACTION WITH HUMAN PON1</scope>
    <scope>DISULFIDE BONDS</scope>
    <scope>TISSUE SPECIFICITY</scope>
    <scope>SUBCELLULAR LOCATION</scope>
    <source>
        <tissue evidence="1">Plasma</tissue>
    </source>
</reference>
<sequence length="376" mass="38533">DINGGGATLPQKLYLTPDVLTAGFAPYIGVGSGKGKIAFLENKYNQFGTDTTKNVHWAGSDSKLTATELATYAADKEPGWGKLIQVPSVATSVAIPFRKAGANAVDLSVKELCGVFSGRIADWSGITGAGRSGPIQVVYRAESSGTTELFTRFLNAKCTTEPGTFAVTTTFANSYSLGLTPLAGAVAATGSDGVMAALNDTTVAEGRITYISPDFAAPTLAGLDDATKVARVGKGVVNGVAVEGKSPAAANVSAAISVVPLPAAADRGNPDVWVPVFGATTGGGVVAYPDSGYPILGFTNLIFSQCYANATQTGQVRDFFTKHYGTSANNDAAIEANAFVPLPSNWKAAVRASFLTASNALSIGNTNVCNGKGRPQ</sequence>
<feature type="chain" id="PRO_0000295168" description="Phosphate-binding protein">
    <location>
        <begin position="1"/>
        <end position="376"/>
    </location>
</feature>
<feature type="disulfide bond" evidence="1">
    <location>
        <begin position="113"/>
        <end position="158"/>
    </location>
</feature>
<feature type="disulfide bond" evidence="1">
    <location>
        <begin position="306"/>
        <end position="369"/>
    </location>
</feature>
<feature type="strand" evidence="4">
    <location>
        <begin position="4"/>
        <end position="6"/>
    </location>
</feature>
<feature type="helix" evidence="4">
    <location>
        <begin position="11"/>
        <end position="14"/>
    </location>
</feature>
<feature type="turn" evidence="4">
    <location>
        <begin position="17"/>
        <end position="19"/>
    </location>
</feature>
<feature type="helix" evidence="4">
    <location>
        <begin position="32"/>
        <end position="41"/>
    </location>
</feature>
<feature type="helix" evidence="4">
    <location>
        <begin position="44"/>
        <end position="46"/>
    </location>
</feature>
<feature type="strand" evidence="4">
    <location>
        <begin position="57"/>
        <end position="62"/>
    </location>
</feature>
<feature type="helix" evidence="4">
    <location>
        <begin position="66"/>
        <end position="75"/>
    </location>
</feature>
<feature type="helix" evidence="4">
    <location>
        <begin position="77"/>
        <end position="80"/>
    </location>
</feature>
<feature type="strand" evidence="4">
    <location>
        <begin position="83"/>
        <end position="92"/>
    </location>
</feature>
<feature type="helix" evidence="4">
    <location>
        <begin position="109"/>
        <end position="117"/>
    </location>
</feature>
<feature type="helix" evidence="4">
    <location>
        <begin position="123"/>
        <end position="125"/>
    </location>
</feature>
<feature type="strand" evidence="4">
    <location>
        <begin position="136"/>
        <end position="142"/>
    </location>
</feature>
<feature type="helix" evidence="4">
    <location>
        <begin position="145"/>
        <end position="157"/>
    </location>
</feature>
<feature type="strand" evidence="4">
    <location>
        <begin position="160"/>
        <end position="163"/>
    </location>
</feature>
<feature type="helix" evidence="4">
    <location>
        <begin position="171"/>
        <end position="173"/>
    </location>
</feature>
<feature type="strand" evidence="4">
    <location>
        <begin position="182"/>
        <end position="184"/>
    </location>
</feature>
<feature type="strand" evidence="4">
    <location>
        <begin position="186"/>
        <end position="189"/>
    </location>
</feature>
<feature type="helix" evidence="4">
    <location>
        <begin position="190"/>
        <end position="199"/>
    </location>
</feature>
<feature type="turn" evidence="4">
    <location>
        <begin position="213"/>
        <end position="215"/>
    </location>
</feature>
<feature type="strand" evidence="4">
    <location>
        <begin position="216"/>
        <end position="219"/>
    </location>
</feature>
<feature type="helix" evidence="4">
    <location>
        <begin position="220"/>
        <end position="224"/>
    </location>
</feature>
<feature type="turn" evidence="4">
    <location>
        <begin position="226"/>
        <end position="228"/>
    </location>
</feature>
<feature type="strand" evidence="4">
    <location>
        <begin position="235"/>
        <end position="237"/>
    </location>
</feature>
<feature type="strand" evidence="4">
    <location>
        <begin position="240"/>
        <end position="242"/>
    </location>
</feature>
<feature type="helix" evidence="4">
    <location>
        <begin position="249"/>
        <end position="251"/>
    </location>
</feature>
<feature type="helix" evidence="4">
    <location>
        <begin position="253"/>
        <end position="257"/>
    </location>
</feature>
<feature type="helix" evidence="4">
    <location>
        <begin position="264"/>
        <end position="266"/>
    </location>
</feature>
<feature type="helix" evidence="4">
    <location>
        <begin position="270"/>
        <end position="273"/>
    </location>
</feature>
<feature type="strand" evidence="4">
    <location>
        <begin position="277"/>
        <end position="280"/>
    </location>
</feature>
<feature type="strand" evidence="4">
    <location>
        <begin position="285"/>
        <end position="287"/>
    </location>
</feature>
<feature type="strand" evidence="4">
    <location>
        <begin position="290"/>
        <end position="292"/>
    </location>
</feature>
<feature type="strand" evidence="4">
    <location>
        <begin position="296"/>
        <end position="305"/>
    </location>
</feature>
<feature type="strand" evidence="4">
    <location>
        <begin position="307"/>
        <end position="309"/>
    </location>
</feature>
<feature type="helix" evidence="4">
    <location>
        <begin position="310"/>
        <end position="323"/>
    </location>
</feature>
<feature type="strand" evidence="4">
    <location>
        <begin position="326"/>
        <end position="330"/>
    </location>
</feature>
<feature type="helix" evidence="4">
    <location>
        <begin position="331"/>
        <end position="336"/>
    </location>
</feature>
<feature type="helix" evidence="4">
    <location>
        <begin position="344"/>
        <end position="354"/>
    </location>
</feature>
<feature type="turn" evidence="4">
    <location>
        <begin position="366"/>
        <end position="368"/>
    </location>
</feature>
<dbReference type="PDB" id="2V3Q">
    <property type="method" value="X-ray"/>
    <property type="resolution" value="1.89 A"/>
    <property type="chains" value="A=1-376"/>
</dbReference>
<dbReference type="PDB" id="3W9V">
    <property type="method" value="X-ray"/>
    <property type="resolution" value="1.03 A"/>
    <property type="chains" value="A/B=1-376"/>
</dbReference>
<dbReference type="PDB" id="3W9W">
    <property type="method" value="X-ray"/>
    <property type="resolution" value="1.35 A"/>
    <property type="chains" value="A/B=1-376"/>
</dbReference>
<dbReference type="PDB" id="4M1V">
    <property type="method" value="X-ray"/>
    <property type="resolution" value="1.30 A"/>
    <property type="chains" value="A=1-376"/>
</dbReference>
<dbReference type="PDBsum" id="2V3Q"/>
<dbReference type="PDBsum" id="3W9V"/>
<dbReference type="PDBsum" id="3W9W"/>
<dbReference type="PDBsum" id="4M1V"/>
<dbReference type="SMR" id="P85173"/>
<dbReference type="EvolutionaryTrace" id="P85173"/>
<dbReference type="GO" id="GO:0005576">
    <property type="term" value="C:extracellular region"/>
    <property type="evidence" value="ECO:0007669"/>
    <property type="project" value="UniProtKB-SubCell"/>
</dbReference>
<dbReference type="GO" id="GO:0006817">
    <property type="term" value="P:phosphate ion transport"/>
    <property type="evidence" value="ECO:0007669"/>
    <property type="project" value="UniProtKB-KW"/>
</dbReference>
<dbReference type="Gene3D" id="3.40.190.10">
    <property type="entry name" value="Periplasmic binding protein-like II"/>
    <property type="match status" value="2"/>
</dbReference>
<dbReference type="InterPro" id="IPR024370">
    <property type="entry name" value="PBP_domain"/>
</dbReference>
<dbReference type="InterPro" id="IPR050962">
    <property type="entry name" value="Phosphate-bind_PstS"/>
</dbReference>
<dbReference type="PANTHER" id="PTHR42996">
    <property type="entry name" value="PHOSPHATE-BINDING PROTEIN PSTS"/>
    <property type="match status" value="1"/>
</dbReference>
<dbReference type="PANTHER" id="PTHR42996:SF1">
    <property type="entry name" value="PHOSPHATE-BINDING PROTEIN PSTS"/>
    <property type="match status" value="1"/>
</dbReference>
<dbReference type="Pfam" id="PF12849">
    <property type="entry name" value="PBP_like_2"/>
    <property type="match status" value="1"/>
</dbReference>
<dbReference type="SUPFAM" id="SSF53850">
    <property type="entry name" value="Periplasmic binding protein-like II"/>
    <property type="match status" value="1"/>
</dbReference>
<proteinExistence type="evidence at protein level"/>
<accession>P85173</accession>
<keyword id="KW-0002">3D-structure</keyword>
<keyword id="KW-0903">Direct protein sequencing</keyword>
<keyword id="KW-1015">Disulfide bond</keyword>
<keyword id="KW-0592">Phosphate transport</keyword>
<keyword id="KW-0964">Secreted</keyword>
<keyword id="KW-0813">Transport</keyword>
<organism>
    <name type="scientific">Unknown prokaryotic organism</name>
    <dbReference type="NCBI Taxonomy" id="2725"/>
    <lineage>
        <taxon>Bacteria</taxon>
        <taxon>environmental samples</taxon>
    </lineage>
</organism>
<name>PHBP_UNKP</name>
<evidence type="ECO:0000269" key="1">
    <source>
    </source>
</evidence>
<evidence type="ECO:0000269" key="2">
    <source>
    </source>
</evidence>
<evidence type="ECO:0000305" key="3"/>
<evidence type="ECO:0007829" key="4">
    <source>
        <dbReference type="PDB" id="3W9V"/>
    </source>
</evidence>